<evidence type="ECO:0000255" key="1">
    <source>
        <dbReference type="HAMAP-Rule" id="MF_00281"/>
    </source>
</evidence>
<dbReference type="EC" id="6.1.1.20" evidence="1"/>
<dbReference type="EMBL" id="CP001219">
    <property type="protein sequence ID" value="ACK78127.1"/>
    <property type="molecule type" value="Genomic_DNA"/>
</dbReference>
<dbReference type="RefSeq" id="WP_012537290.1">
    <property type="nucleotide sequence ID" value="NC_011761.1"/>
</dbReference>
<dbReference type="SMR" id="B7J7S6"/>
<dbReference type="STRING" id="243159.AFE_2610"/>
<dbReference type="PaxDb" id="243159-AFE_2610"/>
<dbReference type="GeneID" id="65281660"/>
<dbReference type="KEGG" id="afr:AFE_2610"/>
<dbReference type="eggNOG" id="COG0016">
    <property type="taxonomic scope" value="Bacteria"/>
</dbReference>
<dbReference type="HOGENOM" id="CLU_025086_0_1_6"/>
<dbReference type="Proteomes" id="UP000001362">
    <property type="component" value="Chromosome"/>
</dbReference>
<dbReference type="GO" id="GO:0005737">
    <property type="term" value="C:cytoplasm"/>
    <property type="evidence" value="ECO:0007669"/>
    <property type="project" value="UniProtKB-SubCell"/>
</dbReference>
<dbReference type="GO" id="GO:0005524">
    <property type="term" value="F:ATP binding"/>
    <property type="evidence" value="ECO:0007669"/>
    <property type="project" value="UniProtKB-UniRule"/>
</dbReference>
<dbReference type="GO" id="GO:0000287">
    <property type="term" value="F:magnesium ion binding"/>
    <property type="evidence" value="ECO:0007669"/>
    <property type="project" value="UniProtKB-UniRule"/>
</dbReference>
<dbReference type="GO" id="GO:0004826">
    <property type="term" value="F:phenylalanine-tRNA ligase activity"/>
    <property type="evidence" value="ECO:0007669"/>
    <property type="project" value="UniProtKB-UniRule"/>
</dbReference>
<dbReference type="GO" id="GO:0000049">
    <property type="term" value="F:tRNA binding"/>
    <property type="evidence" value="ECO:0007669"/>
    <property type="project" value="InterPro"/>
</dbReference>
<dbReference type="GO" id="GO:0006432">
    <property type="term" value="P:phenylalanyl-tRNA aminoacylation"/>
    <property type="evidence" value="ECO:0007669"/>
    <property type="project" value="UniProtKB-UniRule"/>
</dbReference>
<dbReference type="CDD" id="cd00496">
    <property type="entry name" value="PheRS_alpha_core"/>
    <property type="match status" value="1"/>
</dbReference>
<dbReference type="FunFam" id="3.30.930.10:FF:000003">
    <property type="entry name" value="Phenylalanine--tRNA ligase alpha subunit"/>
    <property type="match status" value="1"/>
</dbReference>
<dbReference type="Gene3D" id="3.30.930.10">
    <property type="entry name" value="Bira Bifunctional Protein, Domain 2"/>
    <property type="match status" value="1"/>
</dbReference>
<dbReference type="HAMAP" id="MF_00281">
    <property type="entry name" value="Phe_tRNA_synth_alpha1"/>
    <property type="match status" value="1"/>
</dbReference>
<dbReference type="InterPro" id="IPR006195">
    <property type="entry name" value="aa-tRNA-synth_II"/>
</dbReference>
<dbReference type="InterPro" id="IPR045864">
    <property type="entry name" value="aa-tRNA-synth_II/BPL/LPL"/>
</dbReference>
<dbReference type="InterPro" id="IPR004529">
    <property type="entry name" value="Phe-tRNA-synth_IIc_asu"/>
</dbReference>
<dbReference type="InterPro" id="IPR004188">
    <property type="entry name" value="Phe-tRNA_ligase_II_N"/>
</dbReference>
<dbReference type="InterPro" id="IPR022911">
    <property type="entry name" value="Phe_tRNA_ligase_alpha1_bac"/>
</dbReference>
<dbReference type="InterPro" id="IPR002319">
    <property type="entry name" value="Phenylalanyl-tRNA_Synthase"/>
</dbReference>
<dbReference type="InterPro" id="IPR010978">
    <property type="entry name" value="tRNA-bd_arm"/>
</dbReference>
<dbReference type="NCBIfam" id="TIGR00468">
    <property type="entry name" value="pheS"/>
    <property type="match status" value="1"/>
</dbReference>
<dbReference type="PANTHER" id="PTHR11538:SF41">
    <property type="entry name" value="PHENYLALANINE--TRNA LIGASE, MITOCHONDRIAL"/>
    <property type="match status" value="1"/>
</dbReference>
<dbReference type="PANTHER" id="PTHR11538">
    <property type="entry name" value="PHENYLALANYL-TRNA SYNTHETASE"/>
    <property type="match status" value="1"/>
</dbReference>
<dbReference type="Pfam" id="PF02912">
    <property type="entry name" value="Phe_tRNA-synt_N"/>
    <property type="match status" value="1"/>
</dbReference>
<dbReference type="Pfam" id="PF01409">
    <property type="entry name" value="tRNA-synt_2d"/>
    <property type="match status" value="1"/>
</dbReference>
<dbReference type="SUPFAM" id="SSF55681">
    <property type="entry name" value="Class II aaRS and biotin synthetases"/>
    <property type="match status" value="1"/>
</dbReference>
<dbReference type="SUPFAM" id="SSF46589">
    <property type="entry name" value="tRNA-binding arm"/>
    <property type="match status" value="1"/>
</dbReference>
<dbReference type="PROSITE" id="PS50862">
    <property type="entry name" value="AA_TRNA_LIGASE_II"/>
    <property type="match status" value="1"/>
</dbReference>
<organism>
    <name type="scientific">Acidithiobacillus ferrooxidans (strain ATCC 23270 / DSM 14882 / CIP 104768 / NCIMB 8455)</name>
    <name type="common">Ferrobacillus ferrooxidans (strain ATCC 23270)</name>
    <dbReference type="NCBI Taxonomy" id="243159"/>
    <lineage>
        <taxon>Bacteria</taxon>
        <taxon>Pseudomonadati</taxon>
        <taxon>Pseudomonadota</taxon>
        <taxon>Acidithiobacillia</taxon>
        <taxon>Acidithiobacillales</taxon>
        <taxon>Acidithiobacillaceae</taxon>
        <taxon>Acidithiobacillus</taxon>
    </lineage>
</organism>
<comment type="catalytic activity">
    <reaction evidence="1">
        <text>tRNA(Phe) + L-phenylalanine + ATP = L-phenylalanyl-tRNA(Phe) + AMP + diphosphate + H(+)</text>
        <dbReference type="Rhea" id="RHEA:19413"/>
        <dbReference type="Rhea" id="RHEA-COMP:9668"/>
        <dbReference type="Rhea" id="RHEA-COMP:9699"/>
        <dbReference type="ChEBI" id="CHEBI:15378"/>
        <dbReference type="ChEBI" id="CHEBI:30616"/>
        <dbReference type="ChEBI" id="CHEBI:33019"/>
        <dbReference type="ChEBI" id="CHEBI:58095"/>
        <dbReference type="ChEBI" id="CHEBI:78442"/>
        <dbReference type="ChEBI" id="CHEBI:78531"/>
        <dbReference type="ChEBI" id="CHEBI:456215"/>
        <dbReference type="EC" id="6.1.1.20"/>
    </reaction>
</comment>
<comment type="cofactor">
    <cofactor evidence="1">
        <name>Mg(2+)</name>
        <dbReference type="ChEBI" id="CHEBI:18420"/>
    </cofactor>
    <text evidence="1">Binds 2 magnesium ions per tetramer.</text>
</comment>
<comment type="subunit">
    <text evidence="1">Tetramer of two alpha and two beta subunits.</text>
</comment>
<comment type="subcellular location">
    <subcellularLocation>
        <location evidence="1">Cytoplasm</location>
    </subcellularLocation>
</comment>
<comment type="similarity">
    <text evidence="1">Belongs to the class-II aminoacyl-tRNA synthetase family. Phe-tRNA synthetase alpha subunit type 1 subfamily.</text>
</comment>
<name>SYFA_ACIF2</name>
<feature type="chain" id="PRO_1000119384" description="Phenylalanine--tRNA ligase alpha subunit">
    <location>
        <begin position="1"/>
        <end position="340"/>
    </location>
</feature>
<feature type="binding site" evidence="1">
    <location>
        <position position="254"/>
    </location>
    <ligand>
        <name>Mg(2+)</name>
        <dbReference type="ChEBI" id="CHEBI:18420"/>
        <note>shared with beta subunit</note>
    </ligand>
</feature>
<keyword id="KW-0030">Aminoacyl-tRNA synthetase</keyword>
<keyword id="KW-0067">ATP-binding</keyword>
<keyword id="KW-0963">Cytoplasm</keyword>
<keyword id="KW-0436">Ligase</keyword>
<keyword id="KW-0460">Magnesium</keyword>
<keyword id="KW-0479">Metal-binding</keyword>
<keyword id="KW-0547">Nucleotide-binding</keyword>
<keyword id="KW-0648">Protein biosynthesis</keyword>
<keyword id="KW-1185">Reference proteome</keyword>
<proteinExistence type="inferred from homology"/>
<protein>
    <recommendedName>
        <fullName evidence="1">Phenylalanine--tRNA ligase alpha subunit</fullName>
        <ecNumber evidence="1">6.1.1.20</ecNumber>
    </recommendedName>
    <alternativeName>
        <fullName evidence="1">Phenylalanyl-tRNA synthetase alpha subunit</fullName>
        <shortName evidence="1">PheRS</shortName>
    </alternativeName>
</protein>
<reference key="1">
    <citation type="journal article" date="2008" name="BMC Genomics">
        <title>Acidithiobacillus ferrooxidans metabolism: from genome sequence to industrial applications.</title>
        <authorList>
            <person name="Valdes J."/>
            <person name="Pedroso I."/>
            <person name="Quatrini R."/>
            <person name="Dodson R.J."/>
            <person name="Tettelin H."/>
            <person name="Blake R. II"/>
            <person name="Eisen J.A."/>
            <person name="Holmes D.S."/>
        </authorList>
    </citation>
    <scope>NUCLEOTIDE SEQUENCE [LARGE SCALE GENOMIC DNA]</scope>
    <source>
        <strain>ATCC 23270 / DSM 14882 / CIP 104768 / NCIMB 8455</strain>
    </source>
</reference>
<accession>B7J7S6</accession>
<gene>
    <name evidence="1" type="primary">pheS</name>
    <name type="ordered locus">AFE_2610</name>
</gene>
<sequence>MSFQSMASIAEAAREVAAASDLNTLEQIRLRWLGRKGVLTEAMQQLGQLSPETRREAGQLLNERKSEIQSLLQERKAELEAAAIHARLQQERLDVTLPGRREACGSAHPIRQTLEWIEHYFFGLGFETSDGPEIEDDYHNFAALNIPEDHPARAMHDTFYLDATRLLRTQTSTVQIRFLESHQPPLRMIATGRVYRRDSDITHTPMFHQVEGLLLDERASFADLRGLLSDFLHGFFAKPDLPVRFRPSYFPFTEPSAEIDIGCVICGGSGCRVCKQTGWLEVLGCGMVHPAVLAGAGVDGERFSGFAFGMGVERLTMLRYGVNDLRLFFENDLRFLKQFS</sequence>